<keyword id="KW-1185">Reference proteome</keyword>
<evidence type="ECO:0000255" key="1">
    <source>
        <dbReference type="HAMAP-Rule" id="MF_00758"/>
    </source>
</evidence>
<name>Y165_WIGBR</name>
<proteinExistence type="inferred from homology"/>
<reference key="1">
    <citation type="journal article" date="2002" name="Nat. Genet.">
        <title>Genome sequence of the endocellular obligate symbiont of tsetse flies, Wigglesworthia glossinidia.</title>
        <authorList>
            <person name="Akman L."/>
            <person name="Yamashita A."/>
            <person name="Watanabe H."/>
            <person name="Oshima K."/>
            <person name="Shiba T."/>
            <person name="Hattori M."/>
            <person name="Aksoy S."/>
        </authorList>
    </citation>
    <scope>NUCLEOTIDE SEQUENCE [LARGE SCALE GENOMIC DNA]</scope>
</reference>
<feature type="chain" id="PRO_0000214354" description="UPF0301 protein WIGBR1650">
    <location>
        <begin position="1"/>
        <end position="187"/>
    </location>
</feature>
<sequence>MNLKHHFLIAMPSIKNPLFRRSVVYIYQHSTEGAMGILINKPIHKYTIKNILNKLKINIEKNIDMDKLNHPVLFGGPLSDDRSFILHSPCYSFKSSVNISREITITTSNDIFNTIGTSSQPEKILVALGCSEWGKGQLEQEVIHNAWITTLANLKILFNTPIYDRWYESAKIIGIDIRNISSEIGHS</sequence>
<protein>
    <recommendedName>
        <fullName evidence="1">UPF0301 protein WIGBR1650</fullName>
    </recommendedName>
</protein>
<gene>
    <name type="ordered locus">WIGBR1650</name>
</gene>
<accession>Q8D336</accession>
<comment type="similarity">
    <text evidence="1">Belongs to the UPF0301 (AlgH) family.</text>
</comment>
<organism>
    <name type="scientific">Wigglesworthia glossinidia brevipalpis</name>
    <dbReference type="NCBI Taxonomy" id="36870"/>
    <lineage>
        <taxon>Bacteria</taxon>
        <taxon>Pseudomonadati</taxon>
        <taxon>Pseudomonadota</taxon>
        <taxon>Gammaproteobacteria</taxon>
        <taxon>Enterobacterales</taxon>
        <taxon>Erwiniaceae</taxon>
        <taxon>Wigglesworthia</taxon>
    </lineage>
</organism>
<dbReference type="EMBL" id="BA000021">
    <property type="protein sequence ID" value="BAC24311.1"/>
    <property type="molecule type" value="Genomic_DNA"/>
</dbReference>
<dbReference type="SMR" id="Q8D336"/>
<dbReference type="STRING" id="36870.gene:10368653"/>
<dbReference type="KEGG" id="wbr:yqgE"/>
<dbReference type="eggNOG" id="COG1678">
    <property type="taxonomic scope" value="Bacteria"/>
</dbReference>
<dbReference type="HOGENOM" id="CLU_057596_1_1_6"/>
<dbReference type="OrthoDB" id="9807486at2"/>
<dbReference type="Proteomes" id="UP000000562">
    <property type="component" value="Chromosome"/>
</dbReference>
<dbReference type="GO" id="GO:0005829">
    <property type="term" value="C:cytosol"/>
    <property type="evidence" value="ECO:0007669"/>
    <property type="project" value="TreeGrafter"/>
</dbReference>
<dbReference type="Gene3D" id="3.40.1740.10">
    <property type="entry name" value="VC0467-like"/>
    <property type="match status" value="1"/>
</dbReference>
<dbReference type="Gene3D" id="3.30.70.1300">
    <property type="entry name" value="VC0467-like domains"/>
    <property type="match status" value="1"/>
</dbReference>
<dbReference type="HAMAP" id="MF_00758">
    <property type="entry name" value="UPF0301"/>
    <property type="match status" value="1"/>
</dbReference>
<dbReference type="InterPro" id="IPR003774">
    <property type="entry name" value="AlgH-like"/>
</dbReference>
<dbReference type="NCBIfam" id="NF001266">
    <property type="entry name" value="PRK00228.1-1"/>
    <property type="match status" value="1"/>
</dbReference>
<dbReference type="PANTHER" id="PTHR30327">
    <property type="entry name" value="UNCHARACTERIZED PROTEIN YQGE"/>
    <property type="match status" value="1"/>
</dbReference>
<dbReference type="PANTHER" id="PTHR30327:SF1">
    <property type="entry name" value="UPF0301 PROTEIN YQGE"/>
    <property type="match status" value="1"/>
</dbReference>
<dbReference type="Pfam" id="PF02622">
    <property type="entry name" value="DUF179"/>
    <property type="match status" value="1"/>
</dbReference>
<dbReference type="SUPFAM" id="SSF143456">
    <property type="entry name" value="VC0467-like"/>
    <property type="match status" value="1"/>
</dbReference>